<accession>P0DOH7</accession>
<name>POLS_JAEV1</name>
<protein>
    <recommendedName>
        <fullName>Structural polyprotein</fullName>
    </recommendedName>
    <component>
        <recommendedName>
            <fullName>Capsid protein C</fullName>
        </recommendedName>
        <alternativeName>
            <fullName>Core protein</fullName>
        </alternativeName>
    </component>
    <component>
        <recommendedName>
            <fullName>Protein prM</fullName>
        </recommendedName>
    </component>
    <component>
        <recommendedName>
            <fullName>Peptide pr</fullName>
        </recommendedName>
    </component>
    <component>
        <recommendedName>
            <fullName>Small envelope protein M</fullName>
        </recommendedName>
        <alternativeName>
            <fullName>Matrix protein</fullName>
        </alternativeName>
    </component>
    <component>
        <recommendedName>
            <fullName>Envelope protein E</fullName>
        </recommendedName>
    </component>
    <component>
        <recommendedName>
            <fullName>Non-structural protein 1'</fullName>
            <shortName>NS1'</shortName>
        </recommendedName>
    </component>
</protein>
<comment type="function">
    <molecule>Capsid protein C</molecule>
    <text evidence="3 6">Plays a role in virus budding by binding to the cell membrane and gathering the viral RNA into a nucleocapsid that forms the core of a mature virus particle. During virus entry, may induce genome penetration into the host cytoplasm after hemifusion induced by the surface proteins. Can migrate to the cell nucleus where it modulates host functions. Overcomes the anti-viral effects of host EXOC1 by sequestering and degrading the latter through the proteasome degradation pathway (By similarity). Inhibits the integrated stress response (ISR) in the infected cell by binding to host CAPRIN1 (By similarity).</text>
</comment>
<comment type="function">
    <molecule>Capsid protein C</molecule>
    <text evidence="1">Inhibits RNA silencing by interfering with host Dicer.</text>
</comment>
<comment type="function">
    <molecule>Peptide pr</molecule>
    <text evidence="6">Prevents premature fusion activity of envelope proteins in trans-Golgi by binding to envelope protein E at pH6.0. After virion release in extracellular space, gets dissociated from E dimers.</text>
</comment>
<comment type="function">
    <molecule>Protein prM</molecule>
    <text evidence="6">Acts as a chaperone for envelope protein E during intracellular virion assembly by masking and inactivating envelope protein E fusion peptide. prM is the only viral peptide matured by host furin in the trans-Golgi network probably to avoid catastrophic activation of the viral fusion activity in acidic Golgi compartment prior to virion release. prM-E cleavage is inefficient, and many virions are only partially matured. These uncleaved prM would play a role in immune evasion.</text>
</comment>
<comment type="function">
    <molecule>Small envelope protein M</molecule>
    <text evidence="6">May play a role in virus budding. Exerts cytotoxic effects by activating a mitochondrial apoptotic pathway through M ectodomain. May display a viroporin activity.</text>
</comment>
<comment type="function">
    <molecule>Envelope protein E</molecule>
    <text evidence="6">Binds to host cell surface receptor and mediates fusion between viral and cellular membranes. Envelope protein is synthesized in the endoplasmic reticulum in the form of heterodimer with protein prM. They play a role in virion budding in the ER, and the newly formed immature particle is covered with 60 spikes composed of heterodimer between precursor prM and envelope protein E. The virion is transported to the Golgi apparatus where the low pH causes dissociation of PrM-E heterodimers and formation of E homodimers. prM-E cleavage is inefficient, and many virions are only partially matured. These uncleaved prM would play a role in immune evasion.</text>
</comment>
<comment type="function">
    <molecule>Non-structural protein 1'</molecule>
    <text evidence="3">May play a role in neuroinvasiveness.</text>
</comment>
<comment type="subunit">
    <molecule>Capsid protein C</molecule>
    <text evidence="3 6">Homodimer. Interacts (via N-terminus) with host EXOC1 (via C-terminus); this interaction results in EXOC1 degradation through the proteasome degradation pathway (By similarity). Interacts with host CAPRIN1; this interaction is involved in the suppression of the integrated stress response (By similarity).</text>
</comment>
<comment type="subunit">
    <molecule>Protein prM</molecule>
    <text evidence="6">Forms heterodimers with envelope protein E in the endoplasmic reticulum and Golgi.</text>
</comment>
<comment type="subunit">
    <molecule>Envelope protein E</molecule>
    <text evidence="6">Homodimer; in the endoplasmic reticulum and Golgi. Interacts with protein prM. Interacts with non-structural protein 1.</text>
</comment>
<comment type="subcellular location">
    <molecule>Peptide pr</molecule>
    <subcellularLocation>
        <location evidence="6">Secreted</location>
    </subcellularLocation>
</comment>
<comment type="subcellular location">
    <molecule>Small envelope protein M</molecule>
    <subcellularLocation>
        <location evidence="1">Virion membrane</location>
        <topology evidence="1">Multi-pass membrane protein</topology>
    </subcellularLocation>
    <subcellularLocation>
        <location evidence="1">Host endoplasmic reticulum membrane</location>
        <topology evidence="10">Multi-pass membrane protein</topology>
    </subcellularLocation>
    <text evidence="1">ER membrane retention is mediated by the transmembrane domains.</text>
</comment>
<comment type="subcellular location">
    <molecule>Envelope protein E</molecule>
    <subcellularLocation>
        <location evidence="3">Virion membrane</location>
        <topology evidence="1">Multi-pass membrane protein</topology>
    </subcellularLocation>
    <subcellularLocation>
        <location evidence="1">Host endoplasmic reticulum membrane</location>
        <topology evidence="10">Multi-pass membrane protein</topology>
    </subcellularLocation>
    <text evidence="1">ER membrane retention is mediated by the transmembrane domains.</text>
</comment>
<comment type="subcellular location">
    <molecule>Non-structural protein 1'</molecule>
    <subcellularLocation>
        <location evidence="6">Secreted</location>
    </subcellularLocation>
    <subcellularLocation>
        <location evidence="3">Host endoplasmic reticulum membrane</location>
        <topology evidence="3">Peripheral membrane protein</topology>
        <orientation evidence="6">Lumenal side</orientation>
    </subcellularLocation>
    <text evidence="9">Located in RE-derived vesicles hosting the replication complex.</text>
</comment>
<comment type="alternative products">
    <event type="ribosomal frameshifting"/>
    <isoform>
        <id>P0DOH7-1</id>
        <name>Structural polyprotein</name>
        <sequence type="displayed"/>
    </isoform>
    <isoform>
        <id>P27395-1</id>
        <name>Genome polyprotein</name>
        <sequence type="external"/>
    </isoform>
</comment>
<comment type="domain">
    <text evidence="6">The transmembrane domains of the small envelope protein M and envelope protein E contain an endoplasmic reticulum retention signal.</text>
</comment>
<comment type="PTM">
    <text evidence="6">Genome polyprotein: Specific enzymatic cleavages in vivo yield mature proteins. Cleavages in the lumen of endoplasmic reticulum are performed by host signal peptidase, whereas cleavages in the cytoplasmic side are performed by serine protease NS3. Signal cleavage at the 2K-4B site requires a prior NS3 protease-mediated cleavage at the 4A-2K site.</text>
</comment>
<comment type="PTM">
    <molecule>Protein prM</molecule>
    <text evidence="6">Cleaved in post-Golgi vesicles by a host furin, releasing the mature small envelope protein M, and peptide pr. This cleavage is incomplete as up to 30% of viral particles still carry uncleaved prM.</text>
</comment>
<comment type="PTM">
    <molecule>Envelope protein E</molecule>
    <text evidence="6">N-glycosylated.</text>
</comment>
<comment type="miscellaneous">
    <molecule>Isoform Structural polyprotein</molecule>
    <text evidence="8">Product of a -1 ribosomal frameshifting.</text>
</comment>
<reference key="1">
    <citation type="journal article" date="1990" name="Virology">
        <title>Nucleotide sequence of the virulent SA-14 strain of Japanese encephalitis virus and its attenuated vaccine derivative, SA-14-14-2.</title>
        <authorList>
            <person name="Nitayaphan S."/>
            <person name="Grant J.A."/>
            <person name="Chang G.J.J."/>
            <person name="Trent D.W."/>
        </authorList>
    </citation>
    <scope>NUCLEOTIDE SEQUENCE [GENOMIC RNA]</scope>
</reference>
<proteinExistence type="inferred from homology"/>
<organismHost>
    <name type="scientific">Ardeidae</name>
    <name type="common">herons</name>
    <dbReference type="NCBI Taxonomy" id="8899"/>
</organismHost>
<organismHost>
    <name type="scientific">Bos taurus</name>
    <name type="common">Bovine</name>
    <dbReference type="NCBI Taxonomy" id="9913"/>
</organismHost>
<organismHost>
    <name type="scientific">Culex gelidus</name>
    <dbReference type="NCBI Taxonomy" id="308713"/>
</organismHost>
<organismHost>
    <name type="scientific">Culex tritaeniorhynchus</name>
    <name type="common">Mosquito</name>
    <dbReference type="NCBI Taxonomy" id="7178"/>
</organismHost>
<organismHost>
    <name type="scientific">Equus caballus</name>
    <name type="common">Horse</name>
    <dbReference type="NCBI Taxonomy" id="9796"/>
</organismHost>
<organismHost>
    <name type="scientific">Homo sapiens</name>
    <name type="common">Human</name>
    <dbReference type="NCBI Taxonomy" id="9606"/>
</organismHost>
<organismHost>
    <name type="scientific">Sus scrofa</name>
    <name type="common">Pig</name>
    <dbReference type="NCBI Taxonomy" id="9823"/>
</organismHost>
<dbReference type="EMBL" id="M55506">
    <property type="status" value="NOT_ANNOTATED_CDS"/>
    <property type="molecule type" value="Genomic_RNA"/>
</dbReference>
<dbReference type="SMR" id="P0DOH7"/>
<dbReference type="Proteomes" id="UP000008380">
    <property type="component" value="Genome"/>
</dbReference>
<dbReference type="GO" id="GO:0005576">
    <property type="term" value="C:extracellular region"/>
    <property type="evidence" value="ECO:0007669"/>
    <property type="project" value="UniProtKB-SubCell"/>
</dbReference>
<dbReference type="GO" id="GO:0044167">
    <property type="term" value="C:host cell endoplasmic reticulum membrane"/>
    <property type="evidence" value="ECO:0007669"/>
    <property type="project" value="UniProtKB-SubCell"/>
</dbReference>
<dbReference type="GO" id="GO:0016020">
    <property type="term" value="C:membrane"/>
    <property type="evidence" value="ECO:0007669"/>
    <property type="project" value="UniProtKB-KW"/>
</dbReference>
<dbReference type="GO" id="GO:0019028">
    <property type="term" value="C:viral capsid"/>
    <property type="evidence" value="ECO:0007669"/>
    <property type="project" value="UniProtKB-KW"/>
</dbReference>
<dbReference type="GO" id="GO:0019031">
    <property type="term" value="C:viral envelope"/>
    <property type="evidence" value="ECO:0007669"/>
    <property type="project" value="UniProtKB-KW"/>
</dbReference>
<dbReference type="GO" id="GO:0055036">
    <property type="term" value="C:virion membrane"/>
    <property type="evidence" value="ECO:0007669"/>
    <property type="project" value="UniProtKB-SubCell"/>
</dbReference>
<dbReference type="GO" id="GO:0046983">
    <property type="term" value="F:protein dimerization activity"/>
    <property type="evidence" value="ECO:0007669"/>
    <property type="project" value="InterPro"/>
</dbReference>
<dbReference type="GO" id="GO:0005198">
    <property type="term" value="F:structural molecule activity"/>
    <property type="evidence" value="ECO:0007669"/>
    <property type="project" value="InterPro"/>
</dbReference>
<dbReference type="GO" id="GO:0075512">
    <property type="term" value="P:clathrin-dependent endocytosis of virus by host cell"/>
    <property type="evidence" value="ECO:0007669"/>
    <property type="project" value="UniProtKB-KW"/>
</dbReference>
<dbReference type="GO" id="GO:0039654">
    <property type="term" value="P:fusion of virus membrane with host endosome membrane"/>
    <property type="evidence" value="ECO:0007669"/>
    <property type="project" value="UniProtKB-KW"/>
</dbReference>
<dbReference type="GO" id="GO:0075523">
    <property type="term" value="P:viral translational frameshifting"/>
    <property type="evidence" value="ECO:0007669"/>
    <property type="project" value="UniProtKB-KW"/>
</dbReference>
<dbReference type="GO" id="GO:0019062">
    <property type="term" value="P:virion attachment to host cell"/>
    <property type="evidence" value="ECO:0007669"/>
    <property type="project" value="UniProtKB-KW"/>
</dbReference>
<dbReference type="CDD" id="cd12149">
    <property type="entry name" value="Flavi_E_C"/>
    <property type="match status" value="1"/>
</dbReference>
<dbReference type="CDD" id="cd17038">
    <property type="entry name" value="Flavi_M"/>
    <property type="match status" value="1"/>
</dbReference>
<dbReference type="FunFam" id="1.20.1280.260:FF:000001">
    <property type="entry name" value="Envelope glycoprotein"/>
    <property type="match status" value="1"/>
</dbReference>
<dbReference type="FunFam" id="2.60.40.350:FF:000001">
    <property type="entry name" value="Envelope glycoprotein"/>
    <property type="match status" value="1"/>
</dbReference>
<dbReference type="FunFam" id="2.60.260.50:FF:000001">
    <property type="entry name" value="Genome polyprotein"/>
    <property type="match status" value="1"/>
</dbReference>
<dbReference type="Gene3D" id="1.10.10.930">
    <property type="match status" value="1"/>
</dbReference>
<dbReference type="Gene3D" id="1.20.1280.260">
    <property type="match status" value="1"/>
</dbReference>
<dbReference type="Gene3D" id="2.60.40.350">
    <property type="match status" value="1"/>
</dbReference>
<dbReference type="Gene3D" id="1.10.8.970">
    <property type="entry name" value="Flavivirus envelope glycoprotein M-like"/>
    <property type="match status" value="1"/>
</dbReference>
<dbReference type="Gene3D" id="2.60.260.50">
    <property type="entry name" value="Flavivirus polyprotein propeptide domain"/>
    <property type="match status" value="1"/>
</dbReference>
<dbReference type="Gene3D" id="2.60.98.10">
    <property type="entry name" value="Tick-borne Encephalitis virus Glycoprotein, domain 1"/>
    <property type="match status" value="1"/>
</dbReference>
<dbReference type="Gene3D" id="3.30.67.10">
    <property type="entry name" value="Viral Envelope Glycoprotein, domain 2"/>
    <property type="match status" value="1"/>
</dbReference>
<dbReference type="Gene3D" id="3.30.387.10">
    <property type="entry name" value="Viral Envelope Glycoprotein, domain 3"/>
    <property type="match status" value="1"/>
</dbReference>
<dbReference type="InterPro" id="IPR000069">
    <property type="entry name" value="Env_glycoprot_M_flavivir"/>
</dbReference>
<dbReference type="InterPro" id="IPR038302">
    <property type="entry name" value="Env_glycoprot_M_sf_flavivir"/>
</dbReference>
<dbReference type="InterPro" id="IPR013755">
    <property type="entry name" value="Flav_gly_cen_dom_subdom1"/>
</dbReference>
<dbReference type="InterPro" id="IPR001122">
    <property type="entry name" value="Flavi_capsidC"/>
</dbReference>
<dbReference type="InterPro" id="IPR037172">
    <property type="entry name" value="Flavi_capsidC_sf"/>
</dbReference>
<dbReference type="InterPro" id="IPR027287">
    <property type="entry name" value="Flavi_E_Ig-like"/>
</dbReference>
<dbReference type="InterPro" id="IPR026470">
    <property type="entry name" value="Flavi_E_Stem/Anchor_dom"/>
</dbReference>
<dbReference type="InterPro" id="IPR038345">
    <property type="entry name" value="Flavi_E_Stem/Anchor_dom_sf"/>
</dbReference>
<dbReference type="InterPro" id="IPR011998">
    <property type="entry name" value="Flavi_Glycoprot_E_cen/dimer"/>
</dbReference>
<dbReference type="InterPro" id="IPR001157">
    <property type="entry name" value="Flavi_NS1"/>
</dbReference>
<dbReference type="InterPro" id="IPR002535">
    <property type="entry name" value="Flavi_propep"/>
</dbReference>
<dbReference type="InterPro" id="IPR038688">
    <property type="entry name" value="Flavi_propep_sf"/>
</dbReference>
<dbReference type="InterPro" id="IPR000336">
    <property type="entry name" value="Flavivir/Alphavir_Ig-like_sf"/>
</dbReference>
<dbReference type="InterPro" id="IPR036253">
    <property type="entry name" value="Glycoprot_cen/dimer_sf"/>
</dbReference>
<dbReference type="InterPro" id="IPR038055">
    <property type="entry name" value="Glycoprot_E_dimer_dom"/>
</dbReference>
<dbReference type="InterPro" id="IPR013756">
    <property type="entry name" value="GlyE_cen_dom_subdom2"/>
</dbReference>
<dbReference type="InterPro" id="IPR014756">
    <property type="entry name" value="Ig_E-set"/>
</dbReference>
<dbReference type="NCBIfam" id="TIGR04240">
    <property type="entry name" value="flavi_E_stem"/>
    <property type="match status" value="1"/>
</dbReference>
<dbReference type="Pfam" id="PF01003">
    <property type="entry name" value="Flavi_capsid"/>
    <property type="match status" value="1"/>
</dbReference>
<dbReference type="Pfam" id="PF21659">
    <property type="entry name" value="Flavi_E_stem"/>
    <property type="match status" value="1"/>
</dbReference>
<dbReference type="Pfam" id="PF02832">
    <property type="entry name" value="Flavi_glycop_C"/>
    <property type="match status" value="1"/>
</dbReference>
<dbReference type="Pfam" id="PF00869">
    <property type="entry name" value="Flavi_glycoprot"/>
    <property type="match status" value="1"/>
</dbReference>
<dbReference type="Pfam" id="PF01004">
    <property type="entry name" value="Flavi_M"/>
    <property type="match status" value="1"/>
</dbReference>
<dbReference type="Pfam" id="PF00948">
    <property type="entry name" value="Flavi_NS1"/>
    <property type="match status" value="1"/>
</dbReference>
<dbReference type="Pfam" id="PF01570">
    <property type="entry name" value="Flavi_propep"/>
    <property type="match status" value="1"/>
</dbReference>
<dbReference type="SUPFAM" id="SSF81296">
    <property type="entry name" value="E set domains"/>
    <property type="match status" value="1"/>
</dbReference>
<dbReference type="SUPFAM" id="SSF101257">
    <property type="entry name" value="Flavivirus capsid protein C"/>
    <property type="match status" value="1"/>
</dbReference>
<dbReference type="SUPFAM" id="SSF56983">
    <property type="entry name" value="Viral glycoprotein, central and dimerisation domains"/>
    <property type="match status" value="1"/>
</dbReference>
<sequence>MTKKPGGPGKNRAINMLKRGLPRVFPLVGVKRVVMSLLDGRGPVRFVLALITFFKFTALAPTKALLGRWKAVEKSVAMKHLTSFKRELGTLIDAVNKRGRKQNKRGGNEGSIMWLASLAVVIACAGAMKLSNFQGKLLMTINNTDIADVIVIPTSKGENRCWVRAIDVGYMCEDTITYECPKLTMGNDPEDVDCWCDNQEVYVQYGRCTRTRHSKRSRRSVSVQTHGESSLVNKKEAWLDSTKATRYLMKTENWIIRNPGYAFLAAVLGWMLGSNNGQRVVFTILLLLVAPAYSFNCLGMGNRDFIEGASGATWVDLVLEGDSCLTIMANDKPTLDVRMINIEASQLAEVRSYCYHASVTDISTVARCPTTGEAHNEKRADSSYVCKQGFTDRGWGNGCGLFGKGSIDTCAKFSCTSKAIGRTIQPENIKYEVGIFVHGTTTSENHGNYSAQVGASQAAKFTVTPNAPSITLKLGDYGEVTLDCEPRSGLNTEAFYVMTVGSKSFLVHREWFHDLALPWTSPSSTAWRNRELLMEFEGAHATKQSVVALGSQEGGLHQALAGAIVVEYSSSVKLTSGHLKCRLKMDKLALKGTTYGMCTEKFSFAKNPVDTGHGTVVIELSYSGSDGPCKIPIVSVASLNDMTPVGRLVTVNPFVATSSANSKVLVEMEPPFGDSYIVVGRGDKQINHHWHKAGSTLGKAFSTTLKGAQRLAALGDTAWDFGSIGGVFNSIGRAVHQVFGGAFRTLFGGMSWITQGLMGALLLWMGVNARDRSIALAFLATGGVLVFLATNVHADTGCAIDITRKEMRCGSGIFVHNDVEAWVDRYKYLPETPRSLAKIVHKAHKEGVCGVRSVTRLEHQMWEAVRDELNVLLKENAVDLSVVVNKPVGRYRSAPKRLSMTQEKFEMGWKAWGKSILFAPELANSTFVVDGPETKECPDEHRAWNSMQIEDFGFGITSTRVWLKIREESTDECDGAIIGTAVKGHVAVHSDLSYWIESRYNDTWKLERAVFGEVKSCTWPETHTLWGDDVEESELIIPHTIAGPKSKHNRREGYKTQNQGPWDENGIVLDFDYCPGTKVTITEDCSKRGPSVRTTTDSGKLITDWCCRSCSLPPLRFRTENGCWYGMEIRPVMHDETTLVRSQVDAFKGEMVDPFSAGPSGDVSGHPGSPSQEVDGQIDHSCGFGGPTCADAWGYHLH</sequence>
<evidence type="ECO:0000250" key="1">
    <source>
        <dbReference type="UniProtKB" id="P03314"/>
    </source>
</evidence>
<evidence type="ECO:0000250" key="2">
    <source>
        <dbReference type="UniProtKB" id="P06935"/>
    </source>
</evidence>
<evidence type="ECO:0000250" key="3">
    <source>
        <dbReference type="UniProtKB" id="P0DOH8"/>
    </source>
</evidence>
<evidence type="ECO:0000250" key="4">
    <source>
        <dbReference type="UniProtKB" id="P14335"/>
    </source>
</evidence>
<evidence type="ECO:0000250" key="5">
    <source>
        <dbReference type="UniProtKB" id="P14336"/>
    </source>
</evidence>
<evidence type="ECO:0000250" key="6">
    <source>
        <dbReference type="UniProtKB" id="P17763"/>
    </source>
</evidence>
<evidence type="ECO:0000250" key="7">
    <source>
        <dbReference type="UniProtKB" id="P29990"/>
    </source>
</evidence>
<evidence type="ECO:0000250" key="8">
    <source>
        <dbReference type="UniProtKB" id="P32886"/>
    </source>
</evidence>
<evidence type="ECO:0000250" key="9">
    <source>
        <dbReference type="UniProtKB" id="Q9Q6P4"/>
    </source>
</evidence>
<evidence type="ECO:0000255" key="10"/>
<evidence type="ECO:0000256" key="11">
    <source>
        <dbReference type="SAM" id="MobiDB-lite"/>
    </source>
</evidence>
<keyword id="KW-0167">Capsid protein</keyword>
<keyword id="KW-1165">Clathrin-mediated endocytosis of virus by host</keyword>
<keyword id="KW-0165">Cleavage on pair of basic residues</keyword>
<keyword id="KW-1015">Disulfide bond</keyword>
<keyword id="KW-1170">Fusion of virus membrane with host endosomal membrane</keyword>
<keyword id="KW-1168">Fusion of virus membrane with host membrane</keyword>
<keyword id="KW-0325">Glycoprotein</keyword>
<keyword id="KW-1038">Host endoplasmic reticulum</keyword>
<keyword id="KW-1043">Host membrane</keyword>
<keyword id="KW-0945">Host-virus interaction</keyword>
<keyword id="KW-0472">Membrane</keyword>
<keyword id="KW-0688">Ribosomal frameshifting</keyword>
<keyword id="KW-0964">Secreted</keyword>
<keyword id="KW-0812">Transmembrane</keyword>
<keyword id="KW-1133">Transmembrane helix</keyword>
<keyword id="KW-1161">Viral attachment to host cell</keyword>
<keyword id="KW-0261">Viral envelope protein</keyword>
<keyword id="KW-1162">Viral penetration into host cytoplasm</keyword>
<keyword id="KW-0946">Virion</keyword>
<keyword id="KW-1164">Virus endocytosis by host</keyword>
<keyword id="KW-1160">Virus entry into host cell</keyword>
<feature type="chain" id="PRO_0000441968" description="Structural polyprotein">
    <location>
        <begin position="1"/>
        <end position="1198"/>
    </location>
</feature>
<feature type="chain" id="PRO_0000441969" description="Capsid protein C">
    <location>
        <begin position="1"/>
        <end position="105"/>
    </location>
</feature>
<feature type="propeptide" id="PRO_0000441970" description="ER anchor for the capsid protein C, removed in mature form by serine protease NS3">
    <location>
        <begin position="106"/>
        <end position="127"/>
    </location>
</feature>
<feature type="chain" id="PRO_0000441971" description="Protein prM">
    <location>
        <begin position="128"/>
        <end position="294"/>
    </location>
</feature>
<feature type="chain" id="PRO_0000441972" description="Peptide pr">
    <location>
        <begin position="128"/>
        <end position="219"/>
    </location>
</feature>
<feature type="chain" id="PRO_0000441973" description="Small envelope protein M">
    <location>
        <begin position="220"/>
        <end position="294"/>
    </location>
</feature>
<feature type="chain" id="PRO_0000441974" description="Envelope protein E">
    <location>
        <begin position="295"/>
        <end position="794"/>
    </location>
</feature>
<feature type="chain" id="PRO_0000441975" description="Non-structural protein 1'">
    <location>
        <begin position="795"/>
        <end position="1198"/>
    </location>
</feature>
<feature type="transmembrane region" description="Helical" evidence="10">
    <location>
        <begin position="110"/>
        <end position="130"/>
    </location>
</feature>
<feature type="transmembrane region" description="Helical" evidence="10">
    <location>
        <begin position="254"/>
        <end position="274"/>
    </location>
</feature>
<feature type="transmembrane region" description="Helical" evidence="3">
    <location>
        <begin position="280"/>
        <end position="294"/>
    </location>
</feature>
<feature type="transmembrane region" description="Helical" evidence="10">
    <location>
        <begin position="747"/>
        <end position="767"/>
    </location>
</feature>
<feature type="transmembrane region" description="Helical" evidence="10">
    <location>
        <begin position="774"/>
        <end position="794"/>
    </location>
</feature>
<feature type="region of interest" description="Interaction with host EXOC1" evidence="2">
    <location>
        <begin position="2"/>
        <end position="15"/>
    </location>
</feature>
<feature type="region of interest" description="Hydrophobic; homodimerization of capsid protein C" evidence="7">
    <location>
        <begin position="37"/>
        <end position="72"/>
    </location>
</feature>
<feature type="region of interest" description="Fusion peptide" evidence="5">
    <location>
        <begin position="392"/>
        <end position="405"/>
    </location>
</feature>
<feature type="region of interest" description="Disordered" evidence="11">
    <location>
        <begin position="1151"/>
        <end position="1177"/>
    </location>
</feature>
<feature type="site" description="Cleavage; by viral protease NS3" evidence="2">
    <location>
        <begin position="105"/>
        <end position="106"/>
    </location>
</feature>
<feature type="site" description="Cleavage; by host signal peptidase" evidence="2">
    <location>
        <begin position="127"/>
        <end position="128"/>
    </location>
</feature>
<feature type="site" description="Cleavage; by host furin" evidence="2">
    <location>
        <begin position="219"/>
        <end position="220"/>
    </location>
</feature>
<feature type="site" description="Cleavage; by host signal peptidase" evidence="2">
    <location>
        <begin position="294"/>
        <end position="295"/>
    </location>
</feature>
<feature type="site" description="Cleavage; by host signal peptidase" evidence="2">
    <location>
        <begin position="794"/>
        <end position="795"/>
    </location>
</feature>
<feature type="glycosylation site" description="N-linked (GlcNAc...) asparagine; by host" evidence="4">
    <location>
        <position position="142"/>
    </location>
</feature>
<feature type="glycosylation site" description="N-linked (GlcNAc...) asparagine; by host" evidence="10">
    <location>
        <position position="448"/>
    </location>
</feature>
<feature type="glycosylation site" description="N-linked (GlcNAc...) asparagine; by host" evidence="9">
    <location>
        <position position="924"/>
    </location>
</feature>
<feature type="glycosylation site" description="N-linked (GlcNAc...) asparagine; by host" evidence="9">
    <location>
        <position position="1001"/>
    </location>
</feature>
<feature type="disulfide bond" evidence="9">
    <location>
        <begin position="297"/>
        <end position="324"/>
    </location>
</feature>
<feature type="disulfide bond" evidence="9">
    <location>
        <begin position="354"/>
        <end position="415"/>
    </location>
</feature>
<feature type="disulfide bond" evidence="2">
    <location>
        <begin position="354"/>
        <end position="410"/>
    </location>
</feature>
<feature type="disulfide bond" evidence="9">
    <location>
        <begin position="368"/>
        <end position="399"/>
    </location>
</feature>
<feature type="disulfide bond" evidence="2">
    <location>
        <begin position="386"/>
        <end position="415"/>
    </location>
</feature>
<feature type="disulfide bond" evidence="9">
    <location>
        <begin position="386"/>
        <end position="410"/>
    </location>
</feature>
<feature type="disulfide bond" evidence="9">
    <location>
        <begin position="484"/>
        <end position="581"/>
    </location>
</feature>
<feature type="disulfide bond" evidence="9">
    <location>
        <begin position="598"/>
        <end position="629"/>
    </location>
</feature>
<feature type="disulfide bond" evidence="9">
    <location>
        <begin position="798"/>
        <end position="809"/>
    </location>
</feature>
<feature type="disulfide bond" evidence="9">
    <location>
        <begin position="849"/>
        <end position="937"/>
    </location>
</feature>
<feature type="disulfide bond" evidence="9">
    <location>
        <begin position="973"/>
        <end position="1017"/>
    </location>
</feature>
<feature type="disulfide bond" evidence="9">
    <location>
        <begin position="1074"/>
        <end position="1123"/>
    </location>
</feature>
<feature type="disulfide bond" evidence="9">
    <location>
        <begin position="1085"/>
        <end position="1106"/>
    </location>
</feature>
<feature type="disulfide bond" evidence="9">
    <location>
        <begin position="1107"/>
        <end position="1110"/>
    </location>
</feature>
<organism>
    <name type="scientific">Japanese encephalitis virus (strain SA-14)</name>
    <name type="common">JEV</name>
    <dbReference type="NCBI Taxonomy" id="11073"/>
    <lineage>
        <taxon>Viruses</taxon>
        <taxon>Riboviria</taxon>
        <taxon>Orthornavirae</taxon>
        <taxon>Kitrinoviricota</taxon>
        <taxon>Flasuviricetes</taxon>
        <taxon>Amarillovirales</taxon>
        <taxon>Flaviviridae</taxon>
        <taxon>Orthoflavivirus</taxon>
        <taxon>Orthoflavivirus japonicum</taxon>
    </lineage>
</organism>